<feature type="chain" id="PRO_1000092891" description="Acetylglutamate kinase">
    <location>
        <begin position="1"/>
        <end position="299"/>
    </location>
</feature>
<feature type="binding site" evidence="1">
    <location>
        <begin position="70"/>
        <end position="71"/>
    </location>
    <ligand>
        <name>substrate</name>
    </ligand>
</feature>
<feature type="binding site" evidence="1">
    <location>
        <position position="92"/>
    </location>
    <ligand>
        <name>substrate</name>
    </ligand>
</feature>
<feature type="binding site" evidence="1">
    <location>
        <position position="186"/>
    </location>
    <ligand>
        <name>substrate</name>
    </ligand>
</feature>
<feature type="site" description="Transition state stabilizer" evidence="1">
    <location>
        <position position="35"/>
    </location>
</feature>
<feature type="site" description="Transition state stabilizer" evidence="1">
    <location>
        <position position="249"/>
    </location>
</feature>
<protein>
    <recommendedName>
        <fullName evidence="1">Acetylglutamate kinase</fullName>
        <ecNumber evidence="1">2.7.2.8</ecNumber>
    </recommendedName>
    <alternativeName>
        <fullName evidence="1">N-acetyl-L-glutamate 5-phosphotransferase</fullName>
    </alternativeName>
    <alternativeName>
        <fullName evidence="1">NAG kinase</fullName>
        <shortName evidence="1">NAGK</shortName>
    </alternativeName>
</protein>
<comment type="function">
    <text evidence="1">Catalyzes the ATP-dependent phosphorylation of N-acetyl-L-glutamate.</text>
</comment>
<comment type="catalytic activity">
    <reaction evidence="1">
        <text>N-acetyl-L-glutamate + ATP = N-acetyl-L-glutamyl 5-phosphate + ADP</text>
        <dbReference type="Rhea" id="RHEA:14629"/>
        <dbReference type="ChEBI" id="CHEBI:30616"/>
        <dbReference type="ChEBI" id="CHEBI:44337"/>
        <dbReference type="ChEBI" id="CHEBI:57936"/>
        <dbReference type="ChEBI" id="CHEBI:456216"/>
        <dbReference type="EC" id="2.7.2.8"/>
    </reaction>
</comment>
<comment type="pathway">
    <text evidence="1">Amino-acid biosynthesis; L-arginine biosynthesis; N(2)-acetyl-L-ornithine from L-glutamate: step 2/4.</text>
</comment>
<comment type="subcellular location">
    <subcellularLocation>
        <location evidence="1">Cytoplasm</location>
    </subcellularLocation>
</comment>
<comment type="similarity">
    <text evidence="1">Belongs to the acetylglutamate kinase family. ArgB subfamily.</text>
</comment>
<evidence type="ECO:0000255" key="1">
    <source>
        <dbReference type="HAMAP-Rule" id="MF_00082"/>
    </source>
</evidence>
<keyword id="KW-0028">Amino-acid biosynthesis</keyword>
<keyword id="KW-0055">Arginine biosynthesis</keyword>
<keyword id="KW-0067">ATP-binding</keyword>
<keyword id="KW-0963">Cytoplasm</keyword>
<keyword id="KW-0418">Kinase</keyword>
<keyword id="KW-0547">Nucleotide-binding</keyword>
<keyword id="KW-0808">Transferase</keyword>
<sequence>MIRRQKYGDEIAKAQVLIEALPYIKKFSGTTVVIKYGGSAMLDCNLKRMVMQDIVLMKFVGLNPIVVHGGGPEINKMLERLGIESKFVNGLRVTDEATMEIVEMVLTGRINKEIVSLINELGGQAIGVSGKDGRLLKAEKDTSNGDIGYVGKIVDVNIDVITMMLEKGYIPVIAPTSFGDDGKTYNVNADTAAGKIAEALKAEKLILLTDVEGILSNINDKSSLISRMDLEHAKEFMNSGRINGGMIPKLECCIKAVENGVKRAHIIDGRLTHSLLLEIFTDEGIGTMIGKECFDDDNL</sequence>
<reference key="1">
    <citation type="submission" date="2008-01" db="EMBL/GenBank/DDBJ databases">
        <title>Complete sequence of Thermoanaerobacter sp. X514.</title>
        <authorList>
            <consortium name="US DOE Joint Genome Institute"/>
            <person name="Copeland A."/>
            <person name="Lucas S."/>
            <person name="Lapidus A."/>
            <person name="Barry K."/>
            <person name="Glavina del Rio T."/>
            <person name="Dalin E."/>
            <person name="Tice H."/>
            <person name="Pitluck S."/>
            <person name="Bruce D."/>
            <person name="Goodwin L."/>
            <person name="Saunders E."/>
            <person name="Brettin T."/>
            <person name="Detter J.C."/>
            <person name="Han C."/>
            <person name="Schmutz J."/>
            <person name="Larimer F."/>
            <person name="Land M."/>
            <person name="Hauser L."/>
            <person name="Kyrpides N."/>
            <person name="Kim E."/>
            <person name="Hemme C."/>
            <person name="Fields M.W."/>
            <person name="He Z."/>
            <person name="Zhou J."/>
            <person name="Richardson P."/>
        </authorList>
    </citation>
    <scope>NUCLEOTIDE SEQUENCE [LARGE SCALE GENOMIC DNA]</scope>
    <source>
        <strain>X514</strain>
    </source>
</reference>
<proteinExistence type="inferred from homology"/>
<accession>B0K4D4</accession>
<gene>
    <name evidence="1" type="primary">argB</name>
    <name type="ordered locus">Teth514_0659</name>
</gene>
<name>ARGB_THEPX</name>
<organism>
    <name type="scientific">Thermoanaerobacter sp. (strain X514)</name>
    <dbReference type="NCBI Taxonomy" id="399726"/>
    <lineage>
        <taxon>Bacteria</taxon>
        <taxon>Bacillati</taxon>
        <taxon>Bacillota</taxon>
        <taxon>Clostridia</taxon>
        <taxon>Thermoanaerobacterales</taxon>
        <taxon>Thermoanaerobacteraceae</taxon>
        <taxon>Thermoanaerobacter</taxon>
    </lineage>
</organism>
<dbReference type="EC" id="2.7.2.8" evidence="1"/>
<dbReference type="EMBL" id="CP000923">
    <property type="protein sequence ID" value="ABY91967.1"/>
    <property type="molecule type" value="Genomic_DNA"/>
</dbReference>
<dbReference type="RefSeq" id="WP_009052162.1">
    <property type="nucleotide sequence ID" value="NC_010320.1"/>
</dbReference>
<dbReference type="SMR" id="B0K4D4"/>
<dbReference type="KEGG" id="tex:Teth514_0659"/>
<dbReference type="HOGENOM" id="CLU_053680_0_0_9"/>
<dbReference type="UniPathway" id="UPA00068">
    <property type="reaction ID" value="UER00107"/>
</dbReference>
<dbReference type="Proteomes" id="UP000002155">
    <property type="component" value="Chromosome"/>
</dbReference>
<dbReference type="GO" id="GO:0005737">
    <property type="term" value="C:cytoplasm"/>
    <property type="evidence" value="ECO:0007669"/>
    <property type="project" value="UniProtKB-SubCell"/>
</dbReference>
<dbReference type="GO" id="GO:0003991">
    <property type="term" value="F:acetylglutamate kinase activity"/>
    <property type="evidence" value="ECO:0007669"/>
    <property type="project" value="UniProtKB-UniRule"/>
</dbReference>
<dbReference type="GO" id="GO:0005524">
    <property type="term" value="F:ATP binding"/>
    <property type="evidence" value="ECO:0007669"/>
    <property type="project" value="UniProtKB-UniRule"/>
</dbReference>
<dbReference type="GO" id="GO:0042450">
    <property type="term" value="P:arginine biosynthetic process via ornithine"/>
    <property type="evidence" value="ECO:0007669"/>
    <property type="project" value="UniProtKB-UniRule"/>
</dbReference>
<dbReference type="GO" id="GO:0006526">
    <property type="term" value="P:L-arginine biosynthetic process"/>
    <property type="evidence" value="ECO:0007669"/>
    <property type="project" value="UniProtKB-UniPathway"/>
</dbReference>
<dbReference type="CDD" id="cd04250">
    <property type="entry name" value="AAK_NAGK-C"/>
    <property type="match status" value="1"/>
</dbReference>
<dbReference type="FunFam" id="3.40.1160.10:FF:000004">
    <property type="entry name" value="Acetylglutamate kinase"/>
    <property type="match status" value="1"/>
</dbReference>
<dbReference type="Gene3D" id="3.40.1160.10">
    <property type="entry name" value="Acetylglutamate kinase-like"/>
    <property type="match status" value="1"/>
</dbReference>
<dbReference type="HAMAP" id="MF_00082">
    <property type="entry name" value="ArgB"/>
    <property type="match status" value="1"/>
</dbReference>
<dbReference type="InterPro" id="IPR036393">
    <property type="entry name" value="AceGlu_kinase-like_sf"/>
</dbReference>
<dbReference type="InterPro" id="IPR004662">
    <property type="entry name" value="AcgluKinase_fam"/>
</dbReference>
<dbReference type="InterPro" id="IPR037528">
    <property type="entry name" value="ArgB"/>
</dbReference>
<dbReference type="InterPro" id="IPR001048">
    <property type="entry name" value="Asp/Glu/Uridylate_kinase"/>
</dbReference>
<dbReference type="InterPro" id="IPR041727">
    <property type="entry name" value="NAGK-C"/>
</dbReference>
<dbReference type="NCBIfam" id="TIGR00761">
    <property type="entry name" value="argB"/>
    <property type="match status" value="1"/>
</dbReference>
<dbReference type="PANTHER" id="PTHR23342">
    <property type="entry name" value="N-ACETYLGLUTAMATE SYNTHASE"/>
    <property type="match status" value="1"/>
</dbReference>
<dbReference type="PANTHER" id="PTHR23342:SF0">
    <property type="entry name" value="N-ACETYLGLUTAMATE SYNTHASE, MITOCHONDRIAL"/>
    <property type="match status" value="1"/>
</dbReference>
<dbReference type="Pfam" id="PF00696">
    <property type="entry name" value="AA_kinase"/>
    <property type="match status" value="1"/>
</dbReference>
<dbReference type="PIRSF" id="PIRSF000728">
    <property type="entry name" value="NAGK"/>
    <property type="match status" value="1"/>
</dbReference>
<dbReference type="PRINTS" id="PR01469">
    <property type="entry name" value="CARBMTKINASE"/>
</dbReference>
<dbReference type="SUPFAM" id="SSF53633">
    <property type="entry name" value="Carbamate kinase-like"/>
    <property type="match status" value="1"/>
</dbReference>